<protein>
    <recommendedName>
        <fullName evidence="1">Phosphoribosylformylglycinamidine cyclo-ligase</fullName>
        <ecNumber evidence="1">6.3.3.1</ecNumber>
    </recommendedName>
    <alternativeName>
        <fullName evidence="1">AIR synthase</fullName>
    </alternativeName>
    <alternativeName>
        <fullName evidence="1">AIRS</fullName>
    </alternativeName>
    <alternativeName>
        <fullName evidence="1">Phosphoribosyl-aminoimidazole synthetase</fullName>
    </alternativeName>
</protein>
<reference key="1">
    <citation type="journal article" date="2009" name="ISME J.">
        <title>The genome sequence of the psychrophilic archaeon, Methanococcoides burtonii: the role of genome evolution in cold adaptation.</title>
        <authorList>
            <person name="Allen M.A."/>
            <person name="Lauro F.M."/>
            <person name="Williams T.J."/>
            <person name="Burg D."/>
            <person name="Siddiqui K.S."/>
            <person name="De Francisci D."/>
            <person name="Chong K.W."/>
            <person name="Pilak O."/>
            <person name="Chew H.H."/>
            <person name="De Maere M.Z."/>
            <person name="Ting L."/>
            <person name="Katrib M."/>
            <person name="Ng C."/>
            <person name="Sowers K.R."/>
            <person name="Galperin M.Y."/>
            <person name="Anderson I.J."/>
            <person name="Ivanova N."/>
            <person name="Dalin E."/>
            <person name="Martinez M."/>
            <person name="Lapidus A."/>
            <person name="Hauser L."/>
            <person name="Land M."/>
            <person name="Thomas T."/>
            <person name="Cavicchioli R."/>
        </authorList>
    </citation>
    <scope>NUCLEOTIDE SEQUENCE [LARGE SCALE GENOMIC DNA]</scope>
    <source>
        <strain>DSM 6242 / NBRC 107633 / OCM 468 / ACE-M</strain>
    </source>
</reference>
<feature type="chain" id="PRO_0000258436" description="Phosphoribosylformylglycinamidine cyclo-ligase">
    <location>
        <begin position="1"/>
        <end position="333"/>
    </location>
</feature>
<evidence type="ECO:0000255" key="1">
    <source>
        <dbReference type="HAMAP-Rule" id="MF_00741"/>
    </source>
</evidence>
<name>PUR5_METBU</name>
<sequence>MNEKHLTYADSGVDIEKEESTIKALTNGMTYKREGIGAPLTSIGHYAGLIDFGEYALAMATDGVGSKVLIANEMKRWNTVGIDCIAMNVNDLLAIGAEPISFVDYLALEKHSDDFASQIGEGLVKGAEISRMSIVGGETATLPEIVNGFDLAGTCLGMVKKEEVITGEKVRLGDVLVGIPSNGVHSNGYTLVRDIIKESGHSYHEDFSYNTETTIGDELLIPTRIYMEVLDVIKECDVHGLAHITGSGLLKLKRVTGLGFDFTDPIEPGNIFKFLQEEGNVDDLEMYRTFNMGMGFLIILPEADAEKAAEMTGGKIVGKIVESGIRVRDLEIV</sequence>
<proteinExistence type="inferred from homology"/>
<organism>
    <name type="scientific">Methanococcoides burtonii (strain DSM 6242 / NBRC 107633 / OCM 468 / ACE-M)</name>
    <dbReference type="NCBI Taxonomy" id="259564"/>
    <lineage>
        <taxon>Archaea</taxon>
        <taxon>Methanobacteriati</taxon>
        <taxon>Methanobacteriota</taxon>
        <taxon>Stenosarchaea group</taxon>
        <taxon>Methanomicrobia</taxon>
        <taxon>Methanosarcinales</taxon>
        <taxon>Methanosarcinaceae</taxon>
        <taxon>Methanococcoides</taxon>
    </lineage>
</organism>
<accession>Q12UL8</accession>
<gene>
    <name evidence="1" type="primary">purM</name>
    <name type="ordered locus">Mbur_1979</name>
</gene>
<comment type="catalytic activity">
    <reaction evidence="1">
        <text>2-formamido-N(1)-(5-O-phospho-beta-D-ribosyl)acetamidine + ATP = 5-amino-1-(5-phospho-beta-D-ribosyl)imidazole + ADP + phosphate + H(+)</text>
        <dbReference type="Rhea" id="RHEA:23032"/>
        <dbReference type="ChEBI" id="CHEBI:15378"/>
        <dbReference type="ChEBI" id="CHEBI:30616"/>
        <dbReference type="ChEBI" id="CHEBI:43474"/>
        <dbReference type="ChEBI" id="CHEBI:137981"/>
        <dbReference type="ChEBI" id="CHEBI:147287"/>
        <dbReference type="ChEBI" id="CHEBI:456216"/>
        <dbReference type="EC" id="6.3.3.1"/>
    </reaction>
</comment>
<comment type="pathway">
    <text evidence="1">Purine metabolism; IMP biosynthesis via de novo pathway; 5-amino-1-(5-phospho-D-ribosyl)imidazole from N(2)-formyl-N(1)-(5-phospho-D-ribosyl)glycinamide: step 2/2.</text>
</comment>
<comment type="subcellular location">
    <subcellularLocation>
        <location evidence="1">Cytoplasm</location>
    </subcellularLocation>
</comment>
<comment type="similarity">
    <text evidence="1">Belongs to the AIR synthase family.</text>
</comment>
<keyword id="KW-0067">ATP-binding</keyword>
<keyword id="KW-0963">Cytoplasm</keyword>
<keyword id="KW-0436">Ligase</keyword>
<keyword id="KW-0547">Nucleotide-binding</keyword>
<keyword id="KW-0658">Purine biosynthesis</keyword>
<dbReference type="EC" id="6.3.3.1" evidence="1"/>
<dbReference type="EMBL" id="CP000300">
    <property type="protein sequence ID" value="ABE52858.1"/>
    <property type="molecule type" value="Genomic_DNA"/>
</dbReference>
<dbReference type="RefSeq" id="WP_011500000.1">
    <property type="nucleotide sequence ID" value="NC_007955.1"/>
</dbReference>
<dbReference type="SMR" id="Q12UL8"/>
<dbReference type="STRING" id="259564.Mbur_1979"/>
<dbReference type="GeneID" id="3996931"/>
<dbReference type="KEGG" id="mbu:Mbur_1979"/>
<dbReference type="HOGENOM" id="CLU_047116_0_0_2"/>
<dbReference type="OrthoDB" id="6605at2157"/>
<dbReference type="UniPathway" id="UPA00074">
    <property type="reaction ID" value="UER00129"/>
</dbReference>
<dbReference type="Proteomes" id="UP000001979">
    <property type="component" value="Chromosome"/>
</dbReference>
<dbReference type="GO" id="GO:0005829">
    <property type="term" value="C:cytosol"/>
    <property type="evidence" value="ECO:0007669"/>
    <property type="project" value="TreeGrafter"/>
</dbReference>
<dbReference type="GO" id="GO:0005524">
    <property type="term" value="F:ATP binding"/>
    <property type="evidence" value="ECO:0007669"/>
    <property type="project" value="UniProtKB-KW"/>
</dbReference>
<dbReference type="GO" id="GO:0004637">
    <property type="term" value="F:phosphoribosylamine-glycine ligase activity"/>
    <property type="evidence" value="ECO:0007669"/>
    <property type="project" value="TreeGrafter"/>
</dbReference>
<dbReference type="GO" id="GO:0004641">
    <property type="term" value="F:phosphoribosylformylglycinamidine cyclo-ligase activity"/>
    <property type="evidence" value="ECO:0007669"/>
    <property type="project" value="UniProtKB-UniRule"/>
</dbReference>
<dbReference type="GO" id="GO:0006189">
    <property type="term" value="P:'de novo' IMP biosynthetic process"/>
    <property type="evidence" value="ECO:0007669"/>
    <property type="project" value="UniProtKB-UniRule"/>
</dbReference>
<dbReference type="GO" id="GO:0046084">
    <property type="term" value="P:adenine biosynthetic process"/>
    <property type="evidence" value="ECO:0007669"/>
    <property type="project" value="TreeGrafter"/>
</dbReference>
<dbReference type="CDD" id="cd02196">
    <property type="entry name" value="PurM"/>
    <property type="match status" value="1"/>
</dbReference>
<dbReference type="FunFam" id="3.30.1330.10:FF:000020">
    <property type="entry name" value="Phosphoribosylformylglycinamidine cyclo-ligase"/>
    <property type="match status" value="1"/>
</dbReference>
<dbReference type="FunFam" id="3.90.650.10:FF:000011">
    <property type="entry name" value="Phosphoribosylformylglycinamidine cyclo-ligase"/>
    <property type="match status" value="1"/>
</dbReference>
<dbReference type="Gene3D" id="3.90.650.10">
    <property type="entry name" value="PurM-like C-terminal domain"/>
    <property type="match status" value="1"/>
</dbReference>
<dbReference type="Gene3D" id="3.30.1330.10">
    <property type="entry name" value="PurM-like, N-terminal domain"/>
    <property type="match status" value="1"/>
</dbReference>
<dbReference type="HAMAP" id="MF_00741">
    <property type="entry name" value="AIRS"/>
    <property type="match status" value="1"/>
</dbReference>
<dbReference type="InterPro" id="IPR010918">
    <property type="entry name" value="PurM-like_C_dom"/>
</dbReference>
<dbReference type="InterPro" id="IPR036676">
    <property type="entry name" value="PurM-like_C_sf"/>
</dbReference>
<dbReference type="InterPro" id="IPR016188">
    <property type="entry name" value="PurM-like_N"/>
</dbReference>
<dbReference type="InterPro" id="IPR036921">
    <property type="entry name" value="PurM-like_N_sf"/>
</dbReference>
<dbReference type="InterPro" id="IPR004733">
    <property type="entry name" value="PurM_cligase"/>
</dbReference>
<dbReference type="NCBIfam" id="TIGR00878">
    <property type="entry name" value="purM"/>
    <property type="match status" value="1"/>
</dbReference>
<dbReference type="PANTHER" id="PTHR10520:SF12">
    <property type="entry name" value="TRIFUNCTIONAL PURINE BIOSYNTHETIC PROTEIN ADENOSINE-3"/>
    <property type="match status" value="1"/>
</dbReference>
<dbReference type="PANTHER" id="PTHR10520">
    <property type="entry name" value="TRIFUNCTIONAL PURINE BIOSYNTHETIC PROTEIN ADENOSINE-3-RELATED"/>
    <property type="match status" value="1"/>
</dbReference>
<dbReference type="Pfam" id="PF00586">
    <property type="entry name" value="AIRS"/>
    <property type="match status" value="1"/>
</dbReference>
<dbReference type="Pfam" id="PF02769">
    <property type="entry name" value="AIRS_C"/>
    <property type="match status" value="1"/>
</dbReference>
<dbReference type="SUPFAM" id="SSF56042">
    <property type="entry name" value="PurM C-terminal domain-like"/>
    <property type="match status" value="1"/>
</dbReference>
<dbReference type="SUPFAM" id="SSF55326">
    <property type="entry name" value="PurM N-terminal domain-like"/>
    <property type="match status" value="1"/>
</dbReference>